<proteinExistence type="inferred from homology"/>
<organism>
    <name type="scientific">Mycolicibacterium vanbaalenii (strain DSM 7251 / JCM 13017 / BCRC 16820 / KCTC 9966 / NRRL B-24157 / PYR-1)</name>
    <name type="common">Mycobacterium vanbaalenii</name>
    <dbReference type="NCBI Taxonomy" id="350058"/>
    <lineage>
        <taxon>Bacteria</taxon>
        <taxon>Bacillati</taxon>
        <taxon>Actinomycetota</taxon>
        <taxon>Actinomycetes</taxon>
        <taxon>Mycobacteriales</taxon>
        <taxon>Mycobacteriaceae</taxon>
        <taxon>Mycolicibacterium</taxon>
    </lineage>
</organism>
<protein>
    <recommendedName>
        <fullName evidence="1">Ribosome maturation factor RimP</fullName>
    </recommendedName>
</protein>
<gene>
    <name evidence="1" type="primary">rimP</name>
    <name type="ordered locus">Mvan_2311</name>
</gene>
<feature type="chain" id="PRO_0000384714" description="Ribosome maturation factor RimP">
    <location>
        <begin position="1"/>
        <end position="176"/>
    </location>
</feature>
<keyword id="KW-0963">Cytoplasm</keyword>
<keyword id="KW-0690">Ribosome biogenesis</keyword>
<reference key="1">
    <citation type="submission" date="2006-12" db="EMBL/GenBank/DDBJ databases">
        <title>Complete sequence of Mycobacterium vanbaalenii PYR-1.</title>
        <authorList>
            <consortium name="US DOE Joint Genome Institute"/>
            <person name="Copeland A."/>
            <person name="Lucas S."/>
            <person name="Lapidus A."/>
            <person name="Barry K."/>
            <person name="Detter J.C."/>
            <person name="Glavina del Rio T."/>
            <person name="Hammon N."/>
            <person name="Israni S."/>
            <person name="Dalin E."/>
            <person name="Tice H."/>
            <person name="Pitluck S."/>
            <person name="Singan V."/>
            <person name="Schmutz J."/>
            <person name="Larimer F."/>
            <person name="Land M."/>
            <person name="Hauser L."/>
            <person name="Kyrpides N."/>
            <person name="Anderson I.J."/>
            <person name="Miller C."/>
            <person name="Richardson P."/>
        </authorList>
    </citation>
    <scope>NUCLEOTIDE SEQUENCE [LARGE SCALE GENOMIC DNA]</scope>
    <source>
        <strain>DSM 7251 / JCM 13017 / BCRC 16820 / KCTC 9966 / NRRL B-24157 / PYR-1</strain>
    </source>
</reference>
<name>RIMP_MYCVP</name>
<comment type="function">
    <text evidence="1">Required for maturation of 30S ribosomal subunits.</text>
</comment>
<comment type="subcellular location">
    <subcellularLocation>
        <location evidence="1">Cytoplasm</location>
    </subcellularLocation>
</comment>
<comment type="similarity">
    <text evidence="1">Belongs to the RimP family.</text>
</comment>
<accession>A1T7H5</accession>
<evidence type="ECO:0000255" key="1">
    <source>
        <dbReference type="HAMAP-Rule" id="MF_01077"/>
    </source>
</evidence>
<dbReference type="EMBL" id="CP000511">
    <property type="protein sequence ID" value="ABM13125.1"/>
    <property type="molecule type" value="Genomic_DNA"/>
</dbReference>
<dbReference type="RefSeq" id="WP_011779537.1">
    <property type="nucleotide sequence ID" value="NC_008726.1"/>
</dbReference>
<dbReference type="SMR" id="A1T7H5"/>
<dbReference type="STRING" id="350058.Mvan_2311"/>
<dbReference type="KEGG" id="mva:Mvan_2311"/>
<dbReference type="eggNOG" id="COG0779">
    <property type="taxonomic scope" value="Bacteria"/>
</dbReference>
<dbReference type="HOGENOM" id="CLU_070525_3_0_11"/>
<dbReference type="Proteomes" id="UP000009159">
    <property type="component" value="Chromosome"/>
</dbReference>
<dbReference type="GO" id="GO:0005829">
    <property type="term" value="C:cytosol"/>
    <property type="evidence" value="ECO:0007669"/>
    <property type="project" value="TreeGrafter"/>
</dbReference>
<dbReference type="GO" id="GO:0000028">
    <property type="term" value="P:ribosomal small subunit assembly"/>
    <property type="evidence" value="ECO:0007669"/>
    <property type="project" value="TreeGrafter"/>
</dbReference>
<dbReference type="GO" id="GO:0006412">
    <property type="term" value="P:translation"/>
    <property type="evidence" value="ECO:0007669"/>
    <property type="project" value="TreeGrafter"/>
</dbReference>
<dbReference type="CDD" id="cd01734">
    <property type="entry name" value="YlxS_C"/>
    <property type="match status" value="1"/>
</dbReference>
<dbReference type="Gene3D" id="3.30.300.70">
    <property type="entry name" value="RimP-like superfamily, N-terminal"/>
    <property type="match status" value="1"/>
</dbReference>
<dbReference type="HAMAP" id="MF_01077">
    <property type="entry name" value="RimP"/>
    <property type="match status" value="1"/>
</dbReference>
<dbReference type="InterPro" id="IPR003728">
    <property type="entry name" value="Ribosome_maturation_RimP"/>
</dbReference>
<dbReference type="InterPro" id="IPR028998">
    <property type="entry name" value="RimP_C"/>
</dbReference>
<dbReference type="InterPro" id="IPR036847">
    <property type="entry name" value="RimP_C_sf"/>
</dbReference>
<dbReference type="InterPro" id="IPR028989">
    <property type="entry name" value="RimP_N"/>
</dbReference>
<dbReference type="InterPro" id="IPR035956">
    <property type="entry name" value="RimP_N_sf"/>
</dbReference>
<dbReference type="NCBIfam" id="NF000930">
    <property type="entry name" value="PRK00092.2-2"/>
    <property type="match status" value="1"/>
</dbReference>
<dbReference type="PANTHER" id="PTHR33867">
    <property type="entry name" value="RIBOSOME MATURATION FACTOR RIMP"/>
    <property type="match status" value="1"/>
</dbReference>
<dbReference type="PANTHER" id="PTHR33867:SF1">
    <property type="entry name" value="RIBOSOME MATURATION FACTOR RIMP"/>
    <property type="match status" value="1"/>
</dbReference>
<dbReference type="Pfam" id="PF17384">
    <property type="entry name" value="DUF150_C"/>
    <property type="match status" value="1"/>
</dbReference>
<dbReference type="Pfam" id="PF02576">
    <property type="entry name" value="RimP_N"/>
    <property type="match status" value="1"/>
</dbReference>
<dbReference type="SUPFAM" id="SSF74942">
    <property type="entry name" value="YhbC-like, C-terminal domain"/>
    <property type="match status" value="1"/>
</dbReference>
<dbReference type="SUPFAM" id="SSF75420">
    <property type="entry name" value="YhbC-like, N-terminal domain"/>
    <property type="match status" value="1"/>
</dbReference>
<sequence>MAERSTGLPSQRQVVELLDGEFTRAGYDLEDVVIDAASRPPRITVVTDSDHGLDLDSVAELSRIASELLDGLDSAPYVLEVTSPGVDRPLTTEKHYRRARGRLAEITLTDGSVLTGRIGGVADGTVGVVVREGRSNLSVREIALNAIAKAVVQVEFSPPSPRELELAGVSRKEARA</sequence>